<reference key="1">
    <citation type="journal article" date="2004" name="Proc. Natl. Acad. Sci. U.S.A.">
        <title>The complete genomic sequence of Nocardia farcinica IFM 10152.</title>
        <authorList>
            <person name="Ishikawa J."/>
            <person name="Yamashita A."/>
            <person name="Mikami Y."/>
            <person name="Hoshino Y."/>
            <person name="Kurita H."/>
            <person name="Hotta K."/>
            <person name="Shiba T."/>
            <person name="Hattori M."/>
        </authorList>
    </citation>
    <scope>NUCLEOTIDE SEQUENCE [LARGE SCALE GENOMIC DNA]</scope>
    <source>
        <strain>IFM 10152</strain>
    </source>
</reference>
<gene>
    <name evidence="1" type="primary">rpmD</name>
    <name type="ordered locus">NFA_7920</name>
</gene>
<protein>
    <recommendedName>
        <fullName evidence="1">Large ribosomal subunit protein uL30</fullName>
    </recommendedName>
    <alternativeName>
        <fullName evidence="2">50S ribosomal protein L30</fullName>
    </alternativeName>
</protein>
<organism>
    <name type="scientific">Nocardia farcinica (strain IFM 10152)</name>
    <dbReference type="NCBI Taxonomy" id="247156"/>
    <lineage>
        <taxon>Bacteria</taxon>
        <taxon>Bacillati</taxon>
        <taxon>Actinomycetota</taxon>
        <taxon>Actinomycetes</taxon>
        <taxon>Mycobacteriales</taxon>
        <taxon>Nocardiaceae</taxon>
        <taxon>Nocardia</taxon>
    </lineage>
</organism>
<accession>Q5Z1Q4</accession>
<dbReference type="EMBL" id="AP006618">
    <property type="protein sequence ID" value="BAD55637.1"/>
    <property type="molecule type" value="Genomic_DNA"/>
</dbReference>
<dbReference type="RefSeq" id="WP_011207323.1">
    <property type="nucleotide sequence ID" value="NC_006361.1"/>
</dbReference>
<dbReference type="SMR" id="Q5Z1Q4"/>
<dbReference type="STRING" id="247156.NFA_7920"/>
<dbReference type="GeneID" id="61131623"/>
<dbReference type="KEGG" id="nfa:NFA_7920"/>
<dbReference type="eggNOG" id="COG1841">
    <property type="taxonomic scope" value="Bacteria"/>
</dbReference>
<dbReference type="HOGENOM" id="CLU_131047_2_0_11"/>
<dbReference type="OrthoDB" id="9812790at2"/>
<dbReference type="Proteomes" id="UP000006820">
    <property type="component" value="Chromosome"/>
</dbReference>
<dbReference type="GO" id="GO:0022625">
    <property type="term" value="C:cytosolic large ribosomal subunit"/>
    <property type="evidence" value="ECO:0007669"/>
    <property type="project" value="TreeGrafter"/>
</dbReference>
<dbReference type="GO" id="GO:0003735">
    <property type="term" value="F:structural constituent of ribosome"/>
    <property type="evidence" value="ECO:0007669"/>
    <property type="project" value="InterPro"/>
</dbReference>
<dbReference type="GO" id="GO:0006412">
    <property type="term" value="P:translation"/>
    <property type="evidence" value="ECO:0007669"/>
    <property type="project" value="UniProtKB-UniRule"/>
</dbReference>
<dbReference type="CDD" id="cd01658">
    <property type="entry name" value="Ribosomal_L30"/>
    <property type="match status" value="1"/>
</dbReference>
<dbReference type="FunFam" id="3.30.1390.20:FF:000001">
    <property type="entry name" value="50S ribosomal protein L30"/>
    <property type="match status" value="1"/>
</dbReference>
<dbReference type="Gene3D" id="3.30.1390.20">
    <property type="entry name" value="Ribosomal protein L30, ferredoxin-like fold domain"/>
    <property type="match status" value="1"/>
</dbReference>
<dbReference type="HAMAP" id="MF_01371_B">
    <property type="entry name" value="Ribosomal_uL30_B"/>
    <property type="match status" value="1"/>
</dbReference>
<dbReference type="InterPro" id="IPR036919">
    <property type="entry name" value="Ribo_uL30_ferredoxin-like_sf"/>
</dbReference>
<dbReference type="InterPro" id="IPR005996">
    <property type="entry name" value="Ribosomal_uL30_bac-type"/>
</dbReference>
<dbReference type="InterPro" id="IPR016082">
    <property type="entry name" value="Ribosomal_uL30_ferredoxin-like"/>
</dbReference>
<dbReference type="NCBIfam" id="TIGR01308">
    <property type="entry name" value="rpmD_bact"/>
    <property type="match status" value="1"/>
</dbReference>
<dbReference type="PANTHER" id="PTHR15892:SF2">
    <property type="entry name" value="LARGE RIBOSOMAL SUBUNIT PROTEIN UL30M"/>
    <property type="match status" value="1"/>
</dbReference>
<dbReference type="PANTHER" id="PTHR15892">
    <property type="entry name" value="MITOCHONDRIAL RIBOSOMAL PROTEIN L30"/>
    <property type="match status" value="1"/>
</dbReference>
<dbReference type="Pfam" id="PF00327">
    <property type="entry name" value="Ribosomal_L30"/>
    <property type="match status" value="1"/>
</dbReference>
<dbReference type="PIRSF" id="PIRSF002211">
    <property type="entry name" value="Ribosomal_L30_bac-type"/>
    <property type="match status" value="1"/>
</dbReference>
<dbReference type="SUPFAM" id="SSF55129">
    <property type="entry name" value="Ribosomal protein L30p/L7e"/>
    <property type="match status" value="1"/>
</dbReference>
<proteinExistence type="inferred from homology"/>
<comment type="subunit">
    <text evidence="1">Part of the 50S ribosomal subunit.</text>
</comment>
<comment type="similarity">
    <text evidence="1">Belongs to the universal ribosomal protein uL30 family.</text>
</comment>
<feature type="chain" id="PRO_1000056081" description="Large ribosomal subunit protein uL30">
    <location>
        <begin position="1"/>
        <end position="59"/>
    </location>
</feature>
<sequence length="59" mass="6638">MADLKVTQIKSSIGAKKNQRDSLRTLGLRGIRKSVVREDNPQNRGLINVVRHLVTVEEV</sequence>
<name>RL30_NOCFA</name>
<keyword id="KW-1185">Reference proteome</keyword>
<keyword id="KW-0687">Ribonucleoprotein</keyword>
<keyword id="KW-0689">Ribosomal protein</keyword>
<evidence type="ECO:0000255" key="1">
    <source>
        <dbReference type="HAMAP-Rule" id="MF_01371"/>
    </source>
</evidence>
<evidence type="ECO:0000305" key="2"/>